<evidence type="ECO:0000255" key="1">
    <source>
        <dbReference type="HAMAP-Rule" id="MF_01309"/>
    </source>
</evidence>
<evidence type="ECO:0000305" key="2"/>
<gene>
    <name evidence="1" type="primary">rpsC</name>
    <name type="ordered locus">Sputw3181_0162</name>
</gene>
<name>RS3_SHESW</name>
<reference key="1">
    <citation type="submission" date="2006-12" db="EMBL/GenBank/DDBJ databases">
        <title>Complete sequence of Shewanella sp. W3-18-1.</title>
        <authorList>
            <consortium name="US DOE Joint Genome Institute"/>
            <person name="Copeland A."/>
            <person name="Lucas S."/>
            <person name="Lapidus A."/>
            <person name="Barry K."/>
            <person name="Detter J.C."/>
            <person name="Glavina del Rio T."/>
            <person name="Hammon N."/>
            <person name="Israni S."/>
            <person name="Dalin E."/>
            <person name="Tice H."/>
            <person name="Pitluck S."/>
            <person name="Chain P."/>
            <person name="Malfatti S."/>
            <person name="Shin M."/>
            <person name="Vergez L."/>
            <person name="Schmutz J."/>
            <person name="Larimer F."/>
            <person name="Land M."/>
            <person name="Hauser L."/>
            <person name="Kyrpides N."/>
            <person name="Lykidis A."/>
            <person name="Tiedje J."/>
            <person name="Richardson P."/>
        </authorList>
    </citation>
    <scope>NUCLEOTIDE SEQUENCE [LARGE SCALE GENOMIC DNA]</scope>
    <source>
        <strain>W3-18-1</strain>
    </source>
</reference>
<feature type="chain" id="PRO_0000293885" description="Small ribosomal subunit protein uS3">
    <location>
        <begin position="1"/>
        <end position="230"/>
    </location>
</feature>
<feature type="domain" description="KH type-2" evidence="1">
    <location>
        <begin position="39"/>
        <end position="107"/>
    </location>
</feature>
<accession>A1REC0</accession>
<comment type="function">
    <text evidence="1">Binds the lower part of the 30S subunit head. Binds mRNA in the 70S ribosome, positioning it for translation.</text>
</comment>
<comment type="subunit">
    <text evidence="1">Part of the 30S ribosomal subunit. Forms a tight complex with proteins S10 and S14.</text>
</comment>
<comment type="similarity">
    <text evidence="1">Belongs to the universal ribosomal protein uS3 family.</text>
</comment>
<organism>
    <name type="scientific">Shewanella sp. (strain W3-18-1)</name>
    <dbReference type="NCBI Taxonomy" id="351745"/>
    <lineage>
        <taxon>Bacteria</taxon>
        <taxon>Pseudomonadati</taxon>
        <taxon>Pseudomonadota</taxon>
        <taxon>Gammaproteobacteria</taxon>
        <taxon>Alteromonadales</taxon>
        <taxon>Shewanellaceae</taxon>
        <taxon>Shewanella</taxon>
    </lineage>
</organism>
<proteinExistence type="inferred from homology"/>
<keyword id="KW-0687">Ribonucleoprotein</keyword>
<keyword id="KW-0689">Ribosomal protein</keyword>
<keyword id="KW-0694">RNA-binding</keyword>
<keyword id="KW-0699">rRNA-binding</keyword>
<sequence>MGQKVHPNGIRLGITKPWISTWYADKSDYANNLNSDWEVRKFLVEKLQAASVSKIVIERPAKSIRVTIHTARPGVVIGKKGEDVEVLRAAVSKLAGTPAQINIAEIRKPELDAKLVADSIAQQLERRVMFRRAMKRAVQNAMRIGAQGIKVQVSGRLGGAEIARDEWYREGRVPLHTLRADIDYSTSESHTQYGVIGVKVWIFKGEVLDGMLPQIEEPKQQQPKRKPRGK</sequence>
<protein>
    <recommendedName>
        <fullName evidence="1">Small ribosomal subunit protein uS3</fullName>
    </recommendedName>
    <alternativeName>
        <fullName evidence="2">30S ribosomal protein S3</fullName>
    </alternativeName>
</protein>
<dbReference type="EMBL" id="CP000503">
    <property type="protein sequence ID" value="ABM23015.1"/>
    <property type="molecule type" value="Genomic_DNA"/>
</dbReference>
<dbReference type="RefSeq" id="WP_011787574.1">
    <property type="nucleotide sequence ID" value="NC_008750.1"/>
</dbReference>
<dbReference type="SMR" id="A1REC0"/>
<dbReference type="GeneID" id="67441766"/>
<dbReference type="KEGG" id="shw:Sputw3181_0162"/>
<dbReference type="HOGENOM" id="CLU_058591_0_2_6"/>
<dbReference type="Proteomes" id="UP000002597">
    <property type="component" value="Chromosome"/>
</dbReference>
<dbReference type="GO" id="GO:0022627">
    <property type="term" value="C:cytosolic small ribosomal subunit"/>
    <property type="evidence" value="ECO:0007669"/>
    <property type="project" value="TreeGrafter"/>
</dbReference>
<dbReference type="GO" id="GO:0003729">
    <property type="term" value="F:mRNA binding"/>
    <property type="evidence" value="ECO:0007669"/>
    <property type="project" value="UniProtKB-UniRule"/>
</dbReference>
<dbReference type="GO" id="GO:0019843">
    <property type="term" value="F:rRNA binding"/>
    <property type="evidence" value="ECO:0007669"/>
    <property type="project" value="UniProtKB-UniRule"/>
</dbReference>
<dbReference type="GO" id="GO:0003735">
    <property type="term" value="F:structural constituent of ribosome"/>
    <property type="evidence" value="ECO:0007669"/>
    <property type="project" value="InterPro"/>
</dbReference>
<dbReference type="GO" id="GO:0006412">
    <property type="term" value="P:translation"/>
    <property type="evidence" value="ECO:0007669"/>
    <property type="project" value="UniProtKB-UniRule"/>
</dbReference>
<dbReference type="CDD" id="cd02412">
    <property type="entry name" value="KH-II_30S_S3"/>
    <property type="match status" value="1"/>
</dbReference>
<dbReference type="FunFam" id="3.30.1140.32:FF:000001">
    <property type="entry name" value="30S ribosomal protein S3"/>
    <property type="match status" value="1"/>
</dbReference>
<dbReference type="FunFam" id="3.30.300.20:FF:000001">
    <property type="entry name" value="30S ribosomal protein S3"/>
    <property type="match status" value="1"/>
</dbReference>
<dbReference type="Gene3D" id="3.30.300.20">
    <property type="match status" value="1"/>
</dbReference>
<dbReference type="Gene3D" id="3.30.1140.32">
    <property type="entry name" value="Ribosomal protein S3, C-terminal domain"/>
    <property type="match status" value="1"/>
</dbReference>
<dbReference type="HAMAP" id="MF_01309_B">
    <property type="entry name" value="Ribosomal_uS3_B"/>
    <property type="match status" value="1"/>
</dbReference>
<dbReference type="InterPro" id="IPR004087">
    <property type="entry name" value="KH_dom"/>
</dbReference>
<dbReference type="InterPro" id="IPR015946">
    <property type="entry name" value="KH_dom-like_a/b"/>
</dbReference>
<dbReference type="InterPro" id="IPR004044">
    <property type="entry name" value="KH_dom_type_2"/>
</dbReference>
<dbReference type="InterPro" id="IPR009019">
    <property type="entry name" value="KH_sf_prok-type"/>
</dbReference>
<dbReference type="InterPro" id="IPR036419">
    <property type="entry name" value="Ribosomal_S3_C_sf"/>
</dbReference>
<dbReference type="InterPro" id="IPR005704">
    <property type="entry name" value="Ribosomal_uS3_bac-typ"/>
</dbReference>
<dbReference type="InterPro" id="IPR001351">
    <property type="entry name" value="Ribosomal_uS3_C"/>
</dbReference>
<dbReference type="InterPro" id="IPR018280">
    <property type="entry name" value="Ribosomal_uS3_CS"/>
</dbReference>
<dbReference type="NCBIfam" id="TIGR01009">
    <property type="entry name" value="rpsC_bact"/>
    <property type="match status" value="1"/>
</dbReference>
<dbReference type="PANTHER" id="PTHR11760">
    <property type="entry name" value="30S/40S RIBOSOMAL PROTEIN S3"/>
    <property type="match status" value="1"/>
</dbReference>
<dbReference type="PANTHER" id="PTHR11760:SF19">
    <property type="entry name" value="SMALL RIBOSOMAL SUBUNIT PROTEIN US3C"/>
    <property type="match status" value="1"/>
</dbReference>
<dbReference type="Pfam" id="PF07650">
    <property type="entry name" value="KH_2"/>
    <property type="match status" value="1"/>
</dbReference>
<dbReference type="Pfam" id="PF00189">
    <property type="entry name" value="Ribosomal_S3_C"/>
    <property type="match status" value="1"/>
</dbReference>
<dbReference type="SMART" id="SM00322">
    <property type="entry name" value="KH"/>
    <property type="match status" value="1"/>
</dbReference>
<dbReference type="SUPFAM" id="SSF54814">
    <property type="entry name" value="Prokaryotic type KH domain (KH-domain type II)"/>
    <property type="match status" value="1"/>
</dbReference>
<dbReference type="SUPFAM" id="SSF54821">
    <property type="entry name" value="Ribosomal protein S3 C-terminal domain"/>
    <property type="match status" value="1"/>
</dbReference>
<dbReference type="PROSITE" id="PS50823">
    <property type="entry name" value="KH_TYPE_2"/>
    <property type="match status" value="1"/>
</dbReference>
<dbReference type="PROSITE" id="PS00548">
    <property type="entry name" value="RIBOSOMAL_S3"/>
    <property type="match status" value="1"/>
</dbReference>